<gene>
    <name evidence="1" type="primary">rplN</name>
    <name type="ordered locus">XfasM23_0443</name>
</gene>
<organism>
    <name type="scientific">Xylella fastidiosa (strain M23)</name>
    <dbReference type="NCBI Taxonomy" id="405441"/>
    <lineage>
        <taxon>Bacteria</taxon>
        <taxon>Pseudomonadati</taxon>
        <taxon>Pseudomonadota</taxon>
        <taxon>Gammaproteobacteria</taxon>
        <taxon>Lysobacterales</taxon>
        <taxon>Lysobacteraceae</taxon>
        <taxon>Xylella</taxon>
    </lineage>
</organism>
<accession>B2I8H9</accession>
<sequence length="122" mass="13327">MIQMQSYLGVADNSGAKEVMCIKVLGGSKRRYASIGDVIKVTVKEAIPRGKVKKGEVYDAVVVRTRSGVRRPDGSLIRFDGNAAVLLNNKQEPIGTRVFGPVTRELRSEKLMKIVSLAPEVL</sequence>
<dbReference type="EMBL" id="CP001011">
    <property type="protein sequence ID" value="ACB91890.1"/>
    <property type="molecule type" value="Genomic_DNA"/>
</dbReference>
<dbReference type="RefSeq" id="WP_004090111.1">
    <property type="nucleotide sequence ID" value="NC_010577.1"/>
</dbReference>
<dbReference type="SMR" id="B2I8H9"/>
<dbReference type="GeneID" id="93904149"/>
<dbReference type="KEGG" id="xfn:XfasM23_0443"/>
<dbReference type="HOGENOM" id="CLU_095071_2_1_6"/>
<dbReference type="Proteomes" id="UP000001698">
    <property type="component" value="Chromosome"/>
</dbReference>
<dbReference type="GO" id="GO:0022625">
    <property type="term" value="C:cytosolic large ribosomal subunit"/>
    <property type="evidence" value="ECO:0007669"/>
    <property type="project" value="TreeGrafter"/>
</dbReference>
<dbReference type="GO" id="GO:0070180">
    <property type="term" value="F:large ribosomal subunit rRNA binding"/>
    <property type="evidence" value="ECO:0007669"/>
    <property type="project" value="TreeGrafter"/>
</dbReference>
<dbReference type="GO" id="GO:0003735">
    <property type="term" value="F:structural constituent of ribosome"/>
    <property type="evidence" value="ECO:0007669"/>
    <property type="project" value="InterPro"/>
</dbReference>
<dbReference type="GO" id="GO:0006412">
    <property type="term" value="P:translation"/>
    <property type="evidence" value="ECO:0007669"/>
    <property type="project" value="UniProtKB-UniRule"/>
</dbReference>
<dbReference type="CDD" id="cd00337">
    <property type="entry name" value="Ribosomal_uL14"/>
    <property type="match status" value="1"/>
</dbReference>
<dbReference type="FunFam" id="2.40.150.20:FF:000001">
    <property type="entry name" value="50S ribosomal protein L14"/>
    <property type="match status" value="1"/>
</dbReference>
<dbReference type="Gene3D" id="2.40.150.20">
    <property type="entry name" value="Ribosomal protein L14"/>
    <property type="match status" value="1"/>
</dbReference>
<dbReference type="HAMAP" id="MF_01367">
    <property type="entry name" value="Ribosomal_uL14"/>
    <property type="match status" value="1"/>
</dbReference>
<dbReference type="InterPro" id="IPR000218">
    <property type="entry name" value="Ribosomal_uL14"/>
</dbReference>
<dbReference type="InterPro" id="IPR005745">
    <property type="entry name" value="Ribosomal_uL14_bac-type"/>
</dbReference>
<dbReference type="InterPro" id="IPR019972">
    <property type="entry name" value="Ribosomal_uL14_CS"/>
</dbReference>
<dbReference type="InterPro" id="IPR036853">
    <property type="entry name" value="Ribosomal_uL14_sf"/>
</dbReference>
<dbReference type="NCBIfam" id="TIGR01067">
    <property type="entry name" value="rplN_bact"/>
    <property type="match status" value="1"/>
</dbReference>
<dbReference type="PANTHER" id="PTHR11761">
    <property type="entry name" value="50S/60S RIBOSOMAL PROTEIN L14/L23"/>
    <property type="match status" value="1"/>
</dbReference>
<dbReference type="PANTHER" id="PTHR11761:SF3">
    <property type="entry name" value="LARGE RIBOSOMAL SUBUNIT PROTEIN UL14M"/>
    <property type="match status" value="1"/>
</dbReference>
<dbReference type="Pfam" id="PF00238">
    <property type="entry name" value="Ribosomal_L14"/>
    <property type="match status" value="1"/>
</dbReference>
<dbReference type="SMART" id="SM01374">
    <property type="entry name" value="Ribosomal_L14"/>
    <property type="match status" value="1"/>
</dbReference>
<dbReference type="SUPFAM" id="SSF50193">
    <property type="entry name" value="Ribosomal protein L14"/>
    <property type="match status" value="1"/>
</dbReference>
<dbReference type="PROSITE" id="PS00049">
    <property type="entry name" value="RIBOSOMAL_L14"/>
    <property type="match status" value="1"/>
</dbReference>
<keyword id="KW-0687">Ribonucleoprotein</keyword>
<keyword id="KW-0689">Ribosomal protein</keyword>
<keyword id="KW-0694">RNA-binding</keyword>
<keyword id="KW-0699">rRNA-binding</keyword>
<proteinExistence type="inferred from homology"/>
<evidence type="ECO:0000255" key="1">
    <source>
        <dbReference type="HAMAP-Rule" id="MF_01367"/>
    </source>
</evidence>
<evidence type="ECO:0000305" key="2"/>
<comment type="function">
    <text evidence="1">Binds to 23S rRNA. Forms part of two intersubunit bridges in the 70S ribosome.</text>
</comment>
<comment type="subunit">
    <text evidence="1">Part of the 50S ribosomal subunit. Forms a cluster with proteins L3 and L19. In the 70S ribosome, L14 and L19 interact and together make contacts with the 16S rRNA in bridges B5 and B8.</text>
</comment>
<comment type="similarity">
    <text evidence="1">Belongs to the universal ribosomal protein uL14 family.</text>
</comment>
<name>RL14_XYLF2</name>
<feature type="chain" id="PRO_1000144352" description="Large ribosomal subunit protein uL14">
    <location>
        <begin position="1"/>
        <end position="122"/>
    </location>
</feature>
<protein>
    <recommendedName>
        <fullName evidence="1">Large ribosomal subunit protein uL14</fullName>
    </recommendedName>
    <alternativeName>
        <fullName evidence="2">50S ribosomal protein L14</fullName>
    </alternativeName>
</protein>
<reference key="1">
    <citation type="journal article" date="2010" name="J. Bacteriol.">
        <title>Whole genome sequences of two Xylella fastidiosa strains (M12 and M23) causing almond leaf scorch disease in California.</title>
        <authorList>
            <person name="Chen J."/>
            <person name="Xie G."/>
            <person name="Han S."/>
            <person name="Chertkov O."/>
            <person name="Sims D."/>
            <person name="Civerolo E.L."/>
        </authorList>
    </citation>
    <scope>NUCLEOTIDE SEQUENCE [LARGE SCALE GENOMIC DNA]</scope>
    <source>
        <strain>M23</strain>
    </source>
</reference>